<name>SYT_SHESW</name>
<feature type="chain" id="PRO_1000020510" description="Threonine--tRNA ligase">
    <location>
        <begin position="1"/>
        <end position="642"/>
    </location>
</feature>
<feature type="domain" description="TGS" evidence="2">
    <location>
        <begin position="1"/>
        <end position="61"/>
    </location>
</feature>
<feature type="region of interest" description="Catalytic" evidence="1">
    <location>
        <begin position="243"/>
        <end position="534"/>
    </location>
</feature>
<feature type="binding site" evidence="1">
    <location>
        <position position="334"/>
    </location>
    <ligand>
        <name>Zn(2+)</name>
        <dbReference type="ChEBI" id="CHEBI:29105"/>
    </ligand>
</feature>
<feature type="binding site" evidence="1">
    <location>
        <position position="385"/>
    </location>
    <ligand>
        <name>Zn(2+)</name>
        <dbReference type="ChEBI" id="CHEBI:29105"/>
    </ligand>
</feature>
<feature type="binding site" evidence="1">
    <location>
        <position position="511"/>
    </location>
    <ligand>
        <name>Zn(2+)</name>
        <dbReference type="ChEBI" id="CHEBI:29105"/>
    </ligand>
</feature>
<reference key="1">
    <citation type="submission" date="2006-12" db="EMBL/GenBank/DDBJ databases">
        <title>Complete sequence of Shewanella sp. W3-18-1.</title>
        <authorList>
            <consortium name="US DOE Joint Genome Institute"/>
            <person name="Copeland A."/>
            <person name="Lucas S."/>
            <person name="Lapidus A."/>
            <person name="Barry K."/>
            <person name="Detter J.C."/>
            <person name="Glavina del Rio T."/>
            <person name="Hammon N."/>
            <person name="Israni S."/>
            <person name="Dalin E."/>
            <person name="Tice H."/>
            <person name="Pitluck S."/>
            <person name="Chain P."/>
            <person name="Malfatti S."/>
            <person name="Shin M."/>
            <person name="Vergez L."/>
            <person name="Schmutz J."/>
            <person name="Larimer F."/>
            <person name="Land M."/>
            <person name="Hauser L."/>
            <person name="Kyrpides N."/>
            <person name="Lykidis A."/>
            <person name="Tiedje J."/>
            <person name="Richardson P."/>
        </authorList>
    </citation>
    <scope>NUCLEOTIDE SEQUENCE [LARGE SCALE GENOMIC DNA]</scope>
    <source>
        <strain>W3-18-1</strain>
    </source>
</reference>
<proteinExistence type="inferred from homology"/>
<gene>
    <name evidence="1" type="primary">thrS</name>
    <name type="ordered locus">Sputw3181_1994</name>
</gene>
<sequence length="642" mass="73814">MPVITLPDGSKREFAHAVSTLDVAADIGPGLAKACIAGRVNGELKDACDLIETDAELSIITAKDEEGVEILRHSCAHLLGHAIKQMWPETKMAIGPVIDNGFYYDIDLEHKLTQDDIEALEKRMLQLAKTNYDVVKRVVSWQEARDTFAARGEEYKIAILDENISKDATPALYHHEEYTDMCRGPHVPNMRFCQHFKLMSIAGAYWRGNSENKMLQRIYGTAWADKKALSTHLTRLEEAAKRDHRKIGKQLDLYHMQEEAPGMVFWHNDGWSIFLELERFIRRKLNQYTYQEVKGPLMMDRVLWERSGHWDKYSEAMFTTSSENREYAIKPMNCPGHVQIFNQGLKSYRDLPLRMAEFGCCHRNEPSGSLHGLMRVRGFTQDDAHIFCTDDQVQEEVSACIQMVYDTYSTFGFENIVVKLSTRPEKRIGDDAMWDRAEEALKQALRANNIEFTLLPGEGAFYGPKIEFTLHDCLDRAWQCGTVQLDYALPNRLGATYVAEDNSRQTPVMIHRAILGSLERFLGILIEEYAGRFPTWLAPMQVVVMNITDKQADYVQEIVKFFKEQGIRASFDLRNEKIGFKIREHTLRRVPYLLVVGDQEMENKEVAVRTRDGIDLGKMRLEDFATKIHQQISLRSLKLLEE</sequence>
<dbReference type="EC" id="6.1.1.3" evidence="1"/>
<dbReference type="EMBL" id="CP000503">
    <property type="protein sequence ID" value="ABM24828.1"/>
    <property type="molecule type" value="Genomic_DNA"/>
</dbReference>
<dbReference type="RefSeq" id="WP_011789318.1">
    <property type="nucleotide sequence ID" value="NC_008750.1"/>
</dbReference>
<dbReference type="SMR" id="A1RJI3"/>
<dbReference type="KEGG" id="shw:Sputw3181_1994"/>
<dbReference type="HOGENOM" id="CLU_008554_0_1_6"/>
<dbReference type="Proteomes" id="UP000002597">
    <property type="component" value="Chromosome"/>
</dbReference>
<dbReference type="GO" id="GO:0005829">
    <property type="term" value="C:cytosol"/>
    <property type="evidence" value="ECO:0007669"/>
    <property type="project" value="TreeGrafter"/>
</dbReference>
<dbReference type="GO" id="GO:0005524">
    <property type="term" value="F:ATP binding"/>
    <property type="evidence" value="ECO:0007669"/>
    <property type="project" value="UniProtKB-UniRule"/>
</dbReference>
<dbReference type="GO" id="GO:0046872">
    <property type="term" value="F:metal ion binding"/>
    <property type="evidence" value="ECO:0007669"/>
    <property type="project" value="UniProtKB-KW"/>
</dbReference>
<dbReference type="GO" id="GO:0004829">
    <property type="term" value="F:threonine-tRNA ligase activity"/>
    <property type="evidence" value="ECO:0007669"/>
    <property type="project" value="UniProtKB-UniRule"/>
</dbReference>
<dbReference type="GO" id="GO:0000049">
    <property type="term" value="F:tRNA binding"/>
    <property type="evidence" value="ECO:0007669"/>
    <property type="project" value="UniProtKB-KW"/>
</dbReference>
<dbReference type="GO" id="GO:0006435">
    <property type="term" value="P:threonyl-tRNA aminoacylation"/>
    <property type="evidence" value="ECO:0007669"/>
    <property type="project" value="UniProtKB-UniRule"/>
</dbReference>
<dbReference type="CDD" id="cd01667">
    <property type="entry name" value="TGS_ThrRS"/>
    <property type="match status" value="1"/>
</dbReference>
<dbReference type="CDD" id="cd00860">
    <property type="entry name" value="ThrRS_anticodon"/>
    <property type="match status" value="1"/>
</dbReference>
<dbReference type="CDD" id="cd00771">
    <property type="entry name" value="ThrRS_core"/>
    <property type="match status" value="1"/>
</dbReference>
<dbReference type="FunFam" id="3.10.20.30:FF:000005">
    <property type="entry name" value="Threonine--tRNA ligase"/>
    <property type="match status" value="1"/>
</dbReference>
<dbReference type="FunFam" id="3.30.54.20:FF:000002">
    <property type="entry name" value="Threonine--tRNA ligase"/>
    <property type="match status" value="1"/>
</dbReference>
<dbReference type="FunFam" id="3.30.930.10:FF:000002">
    <property type="entry name" value="Threonine--tRNA ligase"/>
    <property type="match status" value="1"/>
</dbReference>
<dbReference type="FunFam" id="3.40.50.800:FF:000001">
    <property type="entry name" value="Threonine--tRNA ligase"/>
    <property type="match status" value="1"/>
</dbReference>
<dbReference type="FunFam" id="3.30.980.10:FF:000005">
    <property type="entry name" value="Threonyl-tRNA synthetase, mitochondrial"/>
    <property type="match status" value="1"/>
</dbReference>
<dbReference type="Gene3D" id="3.10.20.30">
    <property type="match status" value="1"/>
</dbReference>
<dbReference type="Gene3D" id="3.30.54.20">
    <property type="match status" value="1"/>
</dbReference>
<dbReference type="Gene3D" id="3.40.50.800">
    <property type="entry name" value="Anticodon-binding domain"/>
    <property type="match status" value="1"/>
</dbReference>
<dbReference type="Gene3D" id="3.30.930.10">
    <property type="entry name" value="Bira Bifunctional Protein, Domain 2"/>
    <property type="match status" value="1"/>
</dbReference>
<dbReference type="Gene3D" id="3.30.980.10">
    <property type="entry name" value="Threonyl-trna Synthetase, Chain A, domain 2"/>
    <property type="match status" value="1"/>
</dbReference>
<dbReference type="HAMAP" id="MF_00184">
    <property type="entry name" value="Thr_tRNA_synth"/>
    <property type="match status" value="1"/>
</dbReference>
<dbReference type="InterPro" id="IPR002314">
    <property type="entry name" value="aa-tRNA-synt_IIb"/>
</dbReference>
<dbReference type="InterPro" id="IPR006195">
    <property type="entry name" value="aa-tRNA-synth_II"/>
</dbReference>
<dbReference type="InterPro" id="IPR045864">
    <property type="entry name" value="aa-tRNA-synth_II/BPL/LPL"/>
</dbReference>
<dbReference type="InterPro" id="IPR004154">
    <property type="entry name" value="Anticodon-bd"/>
</dbReference>
<dbReference type="InterPro" id="IPR036621">
    <property type="entry name" value="Anticodon-bd_dom_sf"/>
</dbReference>
<dbReference type="InterPro" id="IPR012675">
    <property type="entry name" value="Beta-grasp_dom_sf"/>
</dbReference>
<dbReference type="InterPro" id="IPR004095">
    <property type="entry name" value="TGS"/>
</dbReference>
<dbReference type="InterPro" id="IPR012676">
    <property type="entry name" value="TGS-like"/>
</dbReference>
<dbReference type="InterPro" id="IPR002320">
    <property type="entry name" value="Thr-tRNA-ligase_IIa"/>
</dbReference>
<dbReference type="InterPro" id="IPR018163">
    <property type="entry name" value="Thr/Ala-tRNA-synth_IIc_edit"/>
</dbReference>
<dbReference type="InterPro" id="IPR047246">
    <property type="entry name" value="ThrRS_anticodon"/>
</dbReference>
<dbReference type="InterPro" id="IPR033728">
    <property type="entry name" value="ThrRS_core"/>
</dbReference>
<dbReference type="InterPro" id="IPR012947">
    <property type="entry name" value="tRNA_SAD"/>
</dbReference>
<dbReference type="NCBIfam" id="TIGR00418">
    <property type="entry name" value="thrS"/>
    <property type="match status" value="1"/>
</dbReference>
<dbReference type="PANTHER" id="PTHR11451:SF44">
    <property type="entry name" value="THREONINE--TRNA LIGASE, CHLOROPLASTIC_MITOCHONDRIAL 2"/>
    <property type="match status" value="1"/>
</dbReference>
<dbReference type="PANTHER" id="PTHR11451">
    <property type="entry name" value="THREONINE-TRNA LIGASE"/>
    <property type="match status" value="1"/>
</dbReference>
<dbReference type="Pfam" id="PF03129">
    <property type="entry name" value="HGTP_anticodon"/>
    <property type="match status" value="1"/>
</dbReference>
<dbReference type="Pfam" id="PF02824">
    <property type="entry name" value="TGS"/>
    <property type="match status" value="1"/>
</dbReference>
<dbReference type="Pfam" id="PF00587">
    <property type="entry name" value="tRNA-synt_2b"/>
    <property type="match status" value="1"/>
</dbReference>
<dbReference type="Pfam" id="PF07973">
    <property type="entry name" value="tRNA_SAD"/>
    <property type="match status" value="1"/>
</dbReference>
<dbReference type="PRINTS" id="PR01047">
    <property type="entry name" value="TRNASYNTHTHR"/>
</dbReference>
<dbReference type="SMART" id="SM00863">
    <property type="entry name" value="tRNA_SAD"/>
    <property type="match status" value="1"/>
</dbReference>
<dbReference type="SUPFAM" id="SSF52954">
    <property type="entry name" value="Class II aaRS ABD-related"/>
    <property type="match status" value="1"/>
</dbReference>
<dbReference type="SUPFAM" id="SSF55681">
    <property type="entry name" value="Class II aaRS and biotin synthetases"/>
    <property type="match status" value="1"/>
</dbReference>
<dbReference type="SUPFAM" id="SSF81271">
    <property type="entry name" value="TGS-like"/>
    <property type="match status" value="1"/>
</dbReference>
<dbReference type="SUPFAM" id="SSF55186">
    <property type="entry name" value="ThrRS/AlaRS common domain"/>
    <property type="match status" value="1"/>
</dbReference>
<dbReference type="PROSITE" id="PS50862">
    <property type="entry name" value="AA_TRNA_LIGASE_II"/>
    <property type="match status" value="1"/>
</dbReference>
<dbReference type="PROSITE" id="PS51880">
    <property type="entry name" value="TGS"/>
    <property type="match status" value="1"/>
</dbReference>
<organism>
    <name type="scientific">Shewanella sp. (strain W3-18-1)</name>
    <dbReference type="NCBI Taxonomy" id="351745"/>
    <lineage>
        <taxon>Bacteria</taxon>
        <taxon>Pseudomonadati</taxon>
        <taxon>Pseudomonadota</taxon>
        <taxon>Gammaproteobacteria</taxon>
        <taxon>Alteromonadales</taxon>
        <taxon>Shewanellaceae</taxon>
        <taxon>Shewanella</taxon>
    </lineage>
</organism>
<accession>A1RJI3</accession>
<keyword id="KW-0030">Aminoacyl-tRNA synthetase</keyword>
<keyword id="KW-0067">ATP-binding</keyword>
<keyword id="KW-0963">Cytoplasm</keyword>
<keyword id="KW-0436">Ligase</keyword>
<keyword id="KW-0479">Metal-binding</keyword>
<keyword id="KW-0547">Nucleotide-binding</keyword>
<keyword id="KW-0648">Protein biosynthesis</keyword>
<keyword id="KW-0694">RNA-binding</keyword>
<keyword id="KW-0820">tRNA-binding</keyword>
<keyword id="KW-0862">Zinc</keyword>
<evidence type="ECO:0000255" key="1">
    <source>
        <dbReference type="HAMAP-Rule" id="MF_00184"/>
    </source>
</evidence>
<evidence type="ECO:0000255" key="2">
    <source>
        <dbReference type="PROSITE-ProRule" id="PRU01228"/>
    </source>
</evidence>
<comment type="function">
    <text evidence="1">Catalyzes the attachment of threonine to tRNA(Thr) in a two-step reaction: L-threonine is first activated by ATP to form Thr-AMP and then transferred to the acceptor end of tRNA(Thr). Also edits incorrectly charged L-seryl-tRNA(Thr).</text>
</comment>
<comment type="catalytic activity">
    <reaction evidence="1">
        <text>tRNA(Thr) + L-threonine + ATP = L-threonyl-tRNA(Thr) + AMP + diphosphate + H(+)</text>
        <dbReference type="Rhea" id="RHEA:24624"/>
        <dbReference type="Rhea" id="RHEA-COMP:9670"/>
        <dbReference type="Rhea" id="RHEA-COMP:9704"/>
        <dbReference type="ChEBI" id="CHEBI:15378"/>
        <dbReference type="ChEBI" id="CHEBI:30616"/>
        <dbReference type="ChEBI" id="CHEBI:33019"/>
        <dbReference type="ChEBI" id="CHEBI:57926"/>
        <dbReference type="ChEBI" id="CHEBI:78442"/>
        <dbReference type="ChEBI" id="CHEBI:78534"/>
        <dbReference type="ChEBI" id="CHEBI:456215"/>
        <dbReference type="EC" id="6.1.1.3"/>
    </reaction>
</comment>
<comment type="cofactor">
    <cofactor evidence="1">
        <name>Zn(2+)</name>
        <dbReference type="ChEBI" id="CHEBI:29105"/>
    </cofactor>
    <text evidence="1">Binds 1 zinc ion per subunit.</text>
</comment>
<comment type="subunit">
    <text evidence="1">Homodimer.</text>
</comment>
<comment type="subcellular location">
    <subcellularLocation>
        <location evidence="1">Cytoplasm</location>
    </subcellularLocation>
</comment>
<comment type="similarity">
    <text evidence="1">Belongs to the class-II aminoacyl-tRNA synthetase family.</text>
</comment>
<protein>
    <recommendedName>
        <fullName evidence="1">Threonine--tRNA ligase</fullName>
        <ecNumber evidence="1">6.1.1.3</ecNumber>
    </recommendedName>
    <alternativeName>
        <fullName evidence="1">Threonyl-tRNA synthetase</fullName>
        <shortName evidence="1">ThrRS</shortName>
    </alternativeName>
</protein>